<gene>
    <name evidence="1" type="primary">ispE</name>
    <name type="ordered locus">BL0656</name>
</gene>
<comment type="function">
    <text evidence="1">Catalyzes the phosphorylation of the position 2 hydroxy group of 4-diphosphocytidyl-2C-methyl-D-erythritol.</text>
</comment>
<comment type="catalytic activity">
    <reaction evidence="1">
        <text>4-CDP-2-C-methyl-D-erythritol + ATP = 4-CDP-2-C-methyl-D-erythritol 2-phosphate + ADP + H(+)</text>
        <dbReference type="Rhea" id="RHEA:18437"/>
        <dbReference type="ChEBI" id="CHEBI:15378"/>
        <dbReference type="ChEBI" id="CHEBI:30616"/>
        <dbReference type="ChEBI" id="CHEBI:57823"/>
        <dbReference type="ChEBI" id="CHEBI:57919"/>
        <dbReference type="ChEBI" id="CHEBI:456216"/>
        <dbReference type="EC" id="2.7.1.148"/>
    </reaction>
</comment>
<comment type="pathway">
    <text evidence="1">Isoprenoid biosynthesis; isopentenyl diphosphate biosynthesis via DXP pathway; isopentenyl diphosphate from 1-deoxy-D-xylulose 5-phosphate: step 3/6.</text>
</comment>
<comment type="similarity">
    <text evidence="1">Belongs to the GHMP kinase family. IspE subfamily.</text>
</comment>
<reference key="1">
    <citation type="journal article" date="2002" name="Proc. Natl. Acad. Sci. U.S.A.">
        <title>The genome sequence of Bifidobacterium longum reflects its adaptation to the human gastrointestinal tract.</title>
        <authorList>
            <person name="Schell M.A."/>
            <person name="Karmirantzou M."/>
            <person name="Snel B."/>
            <person name="Vilanova D."/>
            <person name="Berger B."/>
            <person name="Pessi G."/>
            <person name="Zwahlen M.-C."/>
            <person name="Desiere F."/>
            <person name="Bork P."/>
            <person name="Delley M."/>
            <person name="Pridmore R.D."/>
            <person name="Arigoni F."/>
        </authorList>
    </citation>
    <scope>NUCLEOTIDE SEQUENCE [LARGE SCALE GENOMIC DNA]</scope>
    <source>
        <strain>NCC 2705</strain>
    </source>
</reference>
<sequence>MSPVISHPRSAAARHQSDELSPITITVDCPAKTNLTLEVGPAHDEWGGRHELDTIYCAIGVYDTVTATAKQPGAGFSLELEGAYLGDLASSRSDMRRNHAVLALFAMAQAAEREPDVALTITKRIPVGAGLGGGSADAAATMLAVNRLWELNWPIERLRTIAATLGADMPFCLTGGLAYGTGFGERITDIAPGSRDELALIEQGFSGEVLVGAYQSQLSTPEVYHTFDIVGAAEGDRNHLQAAAISLHPRSGQAIDAATQAGASHAFVSGSGPSVVAFAADEAAAQRIIEVWRDTAVVDRIIRAKSPEHPNISVRQ</sequence>
<organism>
    <name type="scientific">Bifidobacterium longum (strain NCC 2705)</name>
    <dbReference type="NCBI Taxonomy" id="206672"/>
    <lineage>
        <taxon>Bacteria</taxon>
        <taxon>Bacillati</taxon>
        <taxon>Actinomycetota</taxon>
        <taxon>Actinomycetes</taxon>
        <taxon>Bifidobacteriales</taxon>
        <taxon>Bifidobacteriaceae</taxon>
        <taxon>Bifidobacterium</taxon>
    </lineage>
</organism>
<dbReference type="EC" id="2.7.1.148" evidence="1"/>
<dbReference type="EMBL" id="AE014295">
    <property type="protein sequence ID" value="AAN24478.1"/>
    <property type="molecule type" value="Genomic_DNA"/>
</dbReference>
<dbReference type="RefSeq" id="NP_695842.1">
    <property type="nucleotide sequence ID" value="NC_004307.2"/>
</dbReference>
<dbReference type="RefSeq" id="WP_007051793.1">
    <property type="nucleotide sequence ID" value="NC_004307.2"/>
</dbReference>
<dbReference type="SMR" id="Q8G6I4"/>
<dbReference type="STRING" id="206672.BL0656"/>
<dbReference type="EnsemblBacteria" id="AAN24478">
    <property type="protein sequence ID" value="AAN24478"/>
    <property type="gene ID" value="BL0656"/>
</dbReference>
<dbReference type="KEGG" id="blo:BL0656"/>
<dbReference type="PATRIC" id="fig|206672.9.peg.1387"/>
<dbReference type="HOGENOM" id="CLU_053057_1_1_11"/>
<dbReference type="OrthoDB" id="3173073at2"/>
<dbReference type="PhylomeDB" id="Q8G6I4"/>
<dbReference type="UniPathway" id="UPA00056">
    <property type="reaction ID" value="UER00094"/>
</dbReference>
<dbReference type="Proteomes" id="UP000000439">
    <property type="component" value="Chromosome"/>
</dbReference>
<dbReference type="GO" id="GO:0050515">
    <property type="term" value="F:4-(cytidine 5'-diphospho)-2-C-methyl-D-erythritol kinase activity"/>
    <property type="evidence" value="ECO:0007669"/>
    <property type="project" value="UniProtKB-UniRule"/>
</dbReference>
<dbReference type="GO" id="GO:0005524">
    <property type="term" value="F:ATP binding"/>
    <property type="evidence" value="ECO:0007669"/>
    <property type="project" value="UniProtKB-UniRule"/>
</dbReference>
<dbReference type="GO" id="GO:0019288">
    <property type="term" value="P:isopentenyl diphosphate biosynthetic process, methylerythritol 4-phosphate pathway"/>
    <property type="evidence" value="ECO:0007669"/>
    <property type="project" value="UniProtKB-UniRule"/>
</dbReference>
<dbReference type="GO" id="GO:0016114">
    <property type="term" value="P:terpenoid biosynthetic process"/>
    <property type="evidence" value="ECO:0007669"/>
    <property type="project" value="InterPro"/>
</dbReference>
<dbReference type="Gene3D" id="3.30.230.10">
    <property type="match status" value="1"/>
</dbReference>
<dbReference type="Gene3D" id="3.30.70.890">
    <property type="entry name" value="GHMP kinase, C-terminal domain"/>
    <property type="match status" value="1"/>
</dbReference>
<dbReference type="HAMAP" id="MF_00061">
    <property type="entry name" value="IspE"/>
    <property type="match status" value="1"/>
</dbReference>
<dbReference type="InterPro" id="IPR013750">
    <property type="entry name" value="GHMP_kinase_C_dom"/>
</dbReference>
<dbReference type="InterPro" id="IPR036554">
    <property type="entry name" value="GHMP_kinase_C_sf"/>
</dbReference>
<dbReference type="InterPro" id="IPR006204">
    <property type="entry name" value="GHMP_kinase_N_dom"/>
</dbReference>
<dbReference type="InterPro" id="IPR004424">
    <property type="entry name" value="IspE"/>
</dbReference>
<dbReference type="InterPro" id="IPR020568">
    <property type="entry name" value="Ribosomal_Su5_D2-typ_SF"/>
</dbReference>
<dbReference type="InterPro" id="IPR014721">
    <property type="entry name" value="Ribsml_uS5_D2-typ_fold_subgr"/>
</dbReference>
<dbReference type="PANTHER" id="PTHR43527">
    <property type="entry name" value="4-DIPHOSPHOCYTIDYL-2-C-METHYL-D-ERYTHRITOL KINASE, CHLOROPLASTIC"/>
    <property type="match status" value="1"/>
</dbReference>
<dbReference type="PANTHER" id="PTHR43527:SF2">
    <property type="entry name" value="4-DIPHOSPHOCYTIDYL-2-C-METHYL-D-ERYTHRITOL KINASE, CHLOROPLASTIC"/>
    <property type="match status" value="1"/>
</dbReference>
<dbReference type="Pfam" id="PF08544">
    <property type="entry name" value="GHMP_kinases_C"/>
    <property type="match status" value="1"/>
</dbReference>
<dbReference type="Pfam" id="PF00288">
    <property type="entry name" value="GHMP_kinases_N"/>
    <property type="match status" value="1"/>
</dbReference>
<dbReference type="PIRSF" id="PIRSF010376">
    <property type="entry name" value="IspE"/>
    <property type="match status" value="1"/>
</dbReference>
<dbReference type="SUPFAM" id="SSF55060">
    <property type="entry name" value="GHMP Kinase, C-terminal domain"/>
    <property type="match status" value="1"/>
</dbReference>
<dbReference type="SUPFAM" id="SSF54211">
    <property type="entry name" value="Ribosomal protein S5 domain 2-like"/>
    <property type="match status" value="1"/>
</dbReference>
<feature type="chain" id="PRO_0000189190" description="4-diphosphocytidyl-2-C-methyl-D-erythritol kinase">
    <location>
        <begin position="1"/>
        <end position="316"/>
    </location>
</feature>
<feature type="active site" evidence="1">
    <location>
        <position position="32"/>
    </location>
</feature>
<feature type="active site" evidence="1">
    <location>
        <position position="168"/>
    </location>
</feature>
<feature type="binding site" evidence="1">
    <location>
        <begin position="126"/>
        <end position="136"/>
    </location>
    <ligand>
        <name>ATP</name>
        <dbReference type="ChEBI" id="CHEBI:30616"/>
    </ligand>
</feature>
<keyword id="KW-0067">ATP-binding</keyword>
<keyword id="KW-0414">Isoprene biosynthesis</keyword>
<keyword id="KW-0418">Kinase</keyword>
<keyword id="KW-0547">Nucleotide-binding</keyword>
<keyword id="KW-1185">Reference proteome</keyword>
<keyword id="KW-0808">Transferase</keyword>
<proteinExistence type="inferred from homology"/>
<evidence type="ECO:0000255" key="1">
    <source>
        <dbReference type="HAMAP-Rule" id="MF_00061"/>
    </source>
</evidence>
<accession>Q8G6I4</accession>
<protein>
    <recommendedName>
        <fullName evidence="1">4-diphosphocytidyl-2-C-methyl-D-erythritol kinase</fullName>
        <shortName evidence="1">CMK</shortName>
        <ecNumber evidence="1">2.7.1.148</ecNumber>
    </recommendedName>
    <alternativeName>
        <fullName evidence="1">4-(cytidine-5'-diphospho)-2-C-methyl-D-erythritol kinase</fullName>
    </alternativeName>
</protein>
<name>ISPE_BIFLO</name>